<keyword id="KW-0233">DNA recombination</keyword>
<keyword id="KW-0238">DNA-binding</keyword>
<keyword id="KW-0614">Plasmid</keyword>
<keyword id="KW-1185">Reference proteome</keyword>
<keyword id="KW-0814">Transposable element</keyword>
<keyword id="KW-0815">Transposition</keyword>
<comment type="similarity">
    <text evidence="3">Belongs to the transposase IS21/IS408/IS1162 family.</text>
</comment>
<protein>
    <recommendedName>
        <fullName>Putative transposase y4uI</fullName>
    </recommendedName>
</protein>
<sequence length="514" mass="59625">MPTRRLLMRQVREILKLRLDVGLSNRIIAKQLGVGETSVRDTLKRLHREGLTWPLPDTISDRELEQRLYGTPGKKAGRRKQSEPDWSAVARELKRKHVTLQVLWEEYIARDPDGFRYSRYCELFRNWHGRLPLVMRQSHAGGEKLFVDYAGDKVAVVDRKTGVVRDAHIFVAVMGASSLSFALATWSEQLPDWIEAHNAAYRFFGGVTQLLVSDNTKCAVIKACHFDPMVNRSYTDMARHYSTAVFPARPRKPRDKAKVENCVGIVERWLLGRLRNRTFYSLADLNKAIADLITRLNDERVIRQYGKTRRALFDELDAPNLKPLPAEPWVHAEWRRCRVGIDYHIELSRHFYSVPYRFARSEVEVRYTIRTVEIFLGGDRIAAHVRGSSNGRHTTVAVHMPPNHQRYREWTPAKIRSEAKRIGPMLRVLVDRIIEKRAHPEQGYRACVGIIGLERRFGVDRLEAAAQRALEFQVLNYPGIKSILEKELDRLPRSERLEQEPIQHSNLRGSEYYH</sequence>
<dbReference type="EMBL" id="Z68203">
    <property type="protein sequence ID" value="CAA92408.1"/>
    <property type="molecule type" value="Genomic_DNA"/>
</dbReference>
<dbReference type="EMBL" id="U00090">
    <property type="protein sequence ID" value="AAB91881.1"/>
    <property type="molecule type" value="Genomic_DNA"/>
</dbReference>
<dbReference type="RefSeq" id="NP_444094.1">
    <property type="nucleotide sequence ID" value="NC_000914.2"/>
</dbReference>
<dbReference type="SMR" id="Q53201"/>
<dbReference type="KEGG" id="rhi:NGR_a01310"/>
<dbReference type="PATRIC" id="fig|394.7.peg.114"/>
<dbReference type="eggNOG" id="COG4584">
    <property type="taxonomic scope" value="Bacteria"/>
</dbReference>
<dbReference type="HOGENOM" id="CLU_020626_11_0_5"/>
<dbReference type="OrthoDB" id="2065409at2"/>
<dbReference type="Proteomes" id="UP000001054">
    <property type="component" value="Plasmid pNGR234a"/>
</dbReference>
<dbReference type="GO" id="GO:0003677">
    <property type="term" value="F:DNA binding"/>
    <property type="evidence" value="ECO:0007669"/>
    <property type="project" value="UniProtKB-KW"/>
</dbReference>
<dbReference type="GO" id="GO:0015074">
    <property type="term" value="P:DNA integration"/>
    <property type="evidence" value="ECO:0007669"/>
    <property type="project" value="InterPro"/>
</dbReference>
<dbReference type="GO" id="GO:0006310">
    <property type="term" value="P:DNA recombination"/>
    <property type="evidence" value="ECO:0007669"/>
    <property type="project" value="UniProtKB-KW"/>
</dbReference>
<dbReference type="GO" id="GO:0032196">
    <property type="term" value="P:transposition"/>
    <property type="evidence" value="ECO:0007669"/>
    <property type="project" value="UniProtKB-KW"/>
</dbReference>
<dbReference type="Gene3D" id="3.30.420.10">
    <property type="entry name" value="Ribonuclease H-like superfamily/Ribonuclease H"/>
    <property type="match status" value="1"/>
</dbReference>
<dbReference type="InterPro" id="IPR017895">
    <property type="entry name" value="HTH_IS408/IS1162_type"/>
</dbReference>
<dbReference type="InterPro" id="IPR001584">
    <property type="entry name" value="Integrase_cat-core"/>
</dbReference>
<dbReference type="InterPro" id="IPR054353">
    <property type="entry name" value="IstA-like_C"/>
</dbReference>
<dbReference type="InterPro" id="IPR012337">
    <property type="entry name" value="RNaseH-like_sf"/>
</dbReference>
<dbReference type="InterPro" id="IPR036397">
    <property type="entry name" value="RNaseH_sf"/>
</dbReference>
<dbReference type="NCBIfam" id="NF033546">
    <property type="entry name" value="transpos_IS21"/>
    <property type="match status" value="1"/>
</dbReference>
<dbReference type="PANTHER" id="PTHR35004">
    <property type="entry name" value="TRANSPOSASE RV3428C-RELATED"/>
    <property type="match status" value="1"/>
</dbReference>
<dbReference type="PANTHER" id="PTHR35004:SF8">
    <property type="entry name" value="TRANSPOSASE RV3428C-RELATED"/>
    <property type="match status" value="1"/>
</dbReference>
<dbReference type="Pfam" id="PF22483">
    <property type="entry name" value="Mu-transpos_C_2"/>
    <property type="match status" value="1"/>
</dbReference>
<dbReference type="SUPFAM" id="SSF53098">
    <property type="entry name" value="Ribonuclease H-like"/>
    <property type="match status" value="1"/>
</dbReference>
<dbReference type="PROSITE" id="PS50532">
    <property type="entry name" value="HTH_IS408"/>
    <property type="match status" value="1"/>
</dbReference>
<dbReference type="PROSITE" id="PS50994">
    <property type="entry name" value="INTEGRASE"/>
    <property type="match status" value="1"/>
</dbReference>
<proteinExistence type="inferred from homology"/>
<accession>Q53201</accession>
<organism>
    <name type="scientific">Sinorhizobium fredii (strain NBRC 101917 / NGR234)</name>
    <dbReference type="NCBI Taxonomy" id="394"/>
    <lineage>
        <taxon>Bacteria</taxon>
        <taxon>Pseudomonadati</taxon>
        <taxon>Pseudomonadota</taxon>
        <taxon>Alphaproteobacteria</taxon>
        <taxon>Hyphomicrobiales</taxon>
        <taxon>Rhizobiaceae</taxon>
        <taxon>Sinorhizobium/Ensifer group</taxon>
        <taxon>Sinorhizobium</taxon>
    </lineage>
</organism>
<gene>
    <name type="ordered locus">NGR_a01310</name>
    <name type="ORF">y4uI</name>
</gene>
<reference key="1">
    <citation type="journal article" date="1996" name="Genome Res.">
        <title>Sequencing the 500-kb GC-rich symbiotic replicon of Rhizobium sp. NGR234 using dye terminators and a thermostable 'sequenase': a beginning.</title>
        <authorList>
            <person name="Freiberg C."/>
            <person name="Perret X."/>
            <person name="Broughton W.J."/>
            <person name="Rosenthal A."/>
        </authorList>
    </citation>
    <scope>NUCLEOTIDE SEQUENCE [GENOMIC DNA]</scope>
</reference>
<reference key="2">
    <citation type="journal article" date="1997" name="Nature">
        <title>Molecular basis of symbiosis between Rhizobium and legumes.</title>
        <authorList>
            <person name="Freiberg C.A."/>
            <person name="Fellay R."/>
            <person name="Bairoch A."/>
            <person name="Broughton W.J."/>
            <person name="Rosenthal A."/>
            <person name="Perret X."/>
        </authorList>
    </citation>
    <scope>NUCLEOTIDE SEQUENCE [LARGE SCALE GENOMIC DNA]</scope>
    <source>
        <strain>NBRC 101917 / NGR234</strain>
    </source>
</reference>
<reference key="3">
    <citation type="journal article" date="2009" name="Appl. Environ. Microbiol.">
        <title>Rhizobium sp. strain NGR234 possesses a remarkable number of secretion systems.</title>
        <authorList>
            <person name="Schmeisser C."/>
            <person name="Liesegang H."/>
            <person name="Krysciak D."/>
            <person name="Bakkou N."/>
            <person name="Le Quere A."/>
            <person name="Wollherr A."/>
            <person name="Heinemeyer I."/>
            <person name="Morgenstern B."/>
            <person name="Pommerening-Roeser A."/>
            <person name="Flores M."/>
            <person name="Palacios R."/>
            <person name="Brenner S."/>
            <person name="Gottschalk G."/>
            <person name="Schmitz R.A."/>
            <person name="Broughton W.J."/>
            <person name="Perret X."/>
            <person name="Strittmatter A.W."/>
            <person name="Streit W.R."/>
        </authorList>
    </citation>
    <scope>NUCLEOTIDE SEQUENCE [LARGE SCALE GENOMIC DNA]</scope>
    <source>
        <strain>NBRC 101917 / NGR234</strain>
    </source>
</reference>
<name>Y4UI_SINFN</name>
<feature type="chain" id="PRO_0000075473" description="Putative transposase y4uI">
    <location>
        <begin position="1"/>
        <end position="514"/>
    </location>
</feature>
<feature type="domain" description="HTH IS408-type" evidence="2">
    <location>
        <begin position="11"/>
        <end position="93"/>
    </location>
</feature>
<feature type="domain" description="Integrase catalytic" evidence="1">
    <location>
        <begin position="128"/>
        <end position="317"/>
    </location>
</feature>
<geneLocation type="plasmid">
    <name>sym pNGR234a</name>
</geneLocation>
<evidence type="ECO:0000255" key="1">
    <source>
        <dbReference type="PROSITE-ProRule" id="PRU00457"/>
    </source>
</evidence>
<evidence type="ECO:0000255" key="2">
    <source>
        <dbReference type="PROSITE-ProRule" id="PRU00616"/>
    </source>
</evidence>
<evidence type="ECO:0000305" key="3"/>